<proteinExistence type="inferred from homology"/>
<organism>
    <name type="scientific">Streptococcus macedonicus</name>
    <name type="common">Streptococcus gallolyticus macedonicus</name>
    <dbReference type="NCBI Taxonomy" id="59310"/>
    <lineage>
        <taxon>Bacteria</taxon>
        <taxon>Bacillati</taxon>
        <taxon>Bacillota</taxon>
        <taxon>Bacilli</taxon>
        <taxon>Lactobacillales</taxon>
        <taxon>Streptococcaceae</taxon>
        <taxon>Streptococcus</taxon>
    </lineage>
</organism>
<keyword id="KW-0031">Aminopeptidase</keyword>
<keyword id="KW-0963">Cytoplasm</keyword>
<keyword id="KW-0378">Hydrolase</keyword>
<keyword id="KW-0645">Protease</keyword>
<keyword id="KW-0720">Serine protease</keyword>
<gene>
    <name evidence="1" type="primary">pepX</name>
</gene>
<dbReference type="EC" id="3.4.14.11" evidence="1"/>
<dbReference type="EMBL" id="AF373012">
    <property type="protein sequence ID" value="AAM21314.1"/>
    <property type="molecule type" value="Genomic_DNA"/>
</dbReference>
<dbReference type="SMR" id="Q8L376"/>
<dbReference type="ESTHER" id="strma-PEPX">
    <property type="family name" value="Lactobacillus_peptidase"/>
</dbReference>
<dbReference type="GO" id="GO:0005737">
    <property type="term" value="C:cytoplasm"/>
    <property type="evidence" value="ECO:0007669"/>
    <property type="project" value="UniProtKB-SubCell"/>
</dbReference>
<dbReference type="GO" id="GO:0004177">
    <property type="term" value="F:aminopeptidase activity"/>
    <property type="evidence" value="ECO:0007669"/>
    <property type="project" value="UniProtKB-KW"/>
</dbReference>
<dbReference type="GO" id="GO:0008239">
    <property type="term" value="F:dipeptidyl-peptidase activity"/>
    <property type="evidence" value="ECO:0007669"/>
    <property type="project" value="UniProtKB-UniRule"/>
</dbReference>
<dbReference type="GO" id="GO:0008236">
    <property type="term" value="F:serine-type peptidase activity"/>
    <property type="evidence" value="ECO:0007669"/>
    <property type="project" value="UniProtKB-KW"/>
</dbReference>
<dbReference type="GO" id="GO:0006508">
    <property type="term" value="P:proteolysis"/>
    <property type="evidence" value="ECO:0007669"/>
    <property type="project" value="UniProtKB-KW"/>
</dbReference>
<dbReference type="Gene3D" id="1.10.246.70">
    <property type="match status" value="1"/>
</dbReference>
<dbReference type="Gene3D" id="3.40.50.1820">
    <property type="entry name" value="alpha/beta hydrolase"/>
    <property type="match status" value="1"/>
</dbReference>
<dbReference type="Gene3D" id="2.60.120.260">
    <property type="entry name" value="Galactose-binding domain-like"/>
    <property type="match status" value="1"/>
</dbReference>
<dbReference type="HAMAP" id="MF_00698">
    <property type="entry name" value="Aminopeptidase_S15"/>
    <property type="match status" value="1"/>
</dbReference>
<dbReference type="InterPro" id="IPR029058">
    <property type="entry name" value="AB_hydrolase_fold"/>
</dbReference>
<dbReference type="InterPro" id="IPR008979">
    <property type="entry name" value="Galactose-bd-like_sf"/>
</dbReference>
<dbReference type="InterPro" id="IPR008252">
    <property type="entry name" value="Pept_S15_Xpro"/>
</dbReference>
<dbReference type="InterPro" id="IPR015251">
    <property type="entry name" value="PepX_N_dom"/>
</dbReference>
<dbReference type="InterPro" id="IPR036313">
    <property type="entry name" value="PepX_N_dom_sf"/>
</dbReference>
<dbReference type="InterPro" id="IPR000383">
    <property type="entry name" value="Xaa-Pro-like_dom"/>
</dbReference>
<dbReference type="InterPro" id="IPR013736">
    <property type="entry name" value="Xaa-Pro_dipept_C"/>
</dbReference>
<dbReference type="NCBIfam" id="NF003783">
    <property type="entry name" value="PRK05371.1-4"/>
    <property type="match status" value="1"/>
</dbReference>
<dbReference type="Pfam" id="PF02129">
    <property type="entry name" value="Peptidase_S15"/>
    <property type="match status" value="1"/>
</dbReference>
<dbReference type="Pfam" id="PF08530">
    <property type="entry name" value="PepX_C"/>
    <property type="match status" value="1"/>
</dbReference>
<dbReference type="Pfam" id="PF09168">
    <property type="entry name" value="PepX_N"/>
    <property type="match status" value="1"/>
</dbReference>
<dbReference type="PRINTS" id="PR00923">
    <property type="entry name" value="LACTOPTASE"/>
</dbReference>
<dbReference type="SMART" id="SM00939">
    <property type="entry name" value="PepX_C"/>
    <property type="match status" value="1"/>
</dbReference>
<dbReference type="SMART" id="SM00940">
    <property type="entry name" value="PepX_N"/>
    <property type="match status" value="1"/>
</dbReference>
<dbReference type="SUPFAM" id="SSF53474">
    <property type="entry name" value="alpha/beta-Hydrolases"/>
    <property type="match status" value="1"/>
</dbReference>
<dbReference type="SUPFAM" id="SSF49785">
    <property type="entry name" value="Galactose-binding domain-like"/>
    <property type="match status" value="1"/>
</dbReference>
<dbReference type="SUPFAM" id="SSF81761">
    <property type="entry name" value="X-Prolyl dipeptidyl aminopeptidase PepX, N-terminal domain"/>
    <property type="match status" value="1"/>
</dbReference>
<comment type="function">
    <text evidence="1">Removes N-terminal dipeptides sequentially from polypeptides having unsubstituted N-termini provided that the penultimate residue is proline.</text>
</comment>
<comment type="catalytic activity">
    <reaction evidence="1">
        <text>Hydrolyzes Xaa-Pro-|- bonds to release unblocked, N-terminal dipeptides from substrates including Ala-Pro-|-p-nitroanilide and (sequentially) Tyr-Pro-|-Phe-Pro-|-Gly-Pro-|-Ile.</text>
        <dbReference type="EC" id="3.4.14.11"/>
    </reaction>
</comment>
<comment type="subunit">
    <text evidence="1">Homodimer.</text>
</comment>
<comment type="subcellular location">
    <subcellularLocation>
        <location evidence="1">Cytoplasm</location>
    </subcellularLocation>
</comment>
<comment type="similarity">
    <text evidence="1">Belongs to the peptidase S15 family.</text>
</comment>
<evidence type="ECO:0000255" key="1">
    <source>
        <dbReference type="HAMAP-Rule" id="MF_00698"/>
    </source>
</evidence>
<feature type="chain" id="PRO_0000220227" description="Xaa-Pro dipeptidyl-peptidase">
    <location>
        <begin position="1"/>
        <end position="763"/>
    </location>
</feature>
<feature type="active site" description="Charge relay system" evidence="1">
    <location>
        <position position="349"/>
    </location>
</feature>
<feature type="active site" description="Charge relay system" evidence="1">
    <location>
        <position position="469"/>
    </location>
</feature>
<feature type="active site" description="Charge relay system" evidence="1">
    <location>
        <position position="499"/>
    </location>
</feature>
<protein>
    <recommendedName>
        <fullName evidence="1">Xaa-Pro dipeptidyl-peptidase</fullName>
        <ecNumber evidence="1">3.4.14.11</ecNumber>
    </recommendedName>
    <alternativeName>
        <fullName evidence="1">X-Pro dipeptidyl-peptidase</fullName>
    </alternativeName>
    <alternativeName>
        <fullName evidence="1">X-prolyl-dipeptidyl aminopeptidase</fullName>
        <shortName evidence="1">X-PDAP</shortName>
    </alternativeName>
</protein>
<accession>Q8L376</accession>
<sequence>MKYNQFSFIPRPIAIAEQELQALGFDITHQQADKKALENFCRKIFFNYKDTDYPLHQLIADFETDLLTFFNSERPLTADIFYTISLQLLGFIPHVDFTNTTDFLEKIAFPINYQKGHILEALYHLLVSRQKSGMTLLDDLISKGLIPVDNNYHFFNGKSLATFDTTDLIREVVYVQSPLDTDQDGQLDLIKVNIIRPKTSHQLPTMMTASPYHQGTNVVANDKKLYKMEGDLAVKPARTINVETRDFEPLAAPDVDLPIGESEERFNFIDPYTLNDYFLARGFANIYVSGVGTAGSDGFMTSGDYAQVESFKAVIDWLNGKSIAFSSHRRDQKVVADWASGLVCTTGKSYLGTMSTALATTGVEGLKVIIAESAISSWYDYYRENGLVCSPGGYPGEDLDVLTELTYSRNLLPGDYLRNNAHYQEFLDEQSAQLDRASGDYNQFWHDRNYLPHADKVKATCVFTHGLQDWNVKPRHIFNIFNALPDTVEKHAFLHHGEHVYMHNWQSIDFRESMNTLLSEKMLGQDNHFVLPTLIWQDNSQEQAWTSLAEFGSSNQATLALGTDQKIIDNHYAKAEFERYSKNFRTFKSELFTGKANAICLDLPIKNDYHINGQITLHLTVKSSENKGILSAQVLDYGEKKRFKDVPSVLDLYAIDNGCNFSREALKELPFTKAKERVITKGVLNLQNRTDLLTIEDIPANEWMTFDFTLQPSIYKLEKGDTLRVLLYTTDFEHTIRDNSNYILTVDLDKSNLEIPIENNVGL</sequence>
<name>PEPX_STRMC</name>
<reference key="1">
    <citation type="submission" date="2001-04" db="EMBL/GenBank/DDBJ databases">
        <title>Streptococcus macedonicus pepX gene encoding X-prolyl-dipeptidyl-aminopeptidase.</title>
        <authorList>
            <person name="Georgalaki M.D."/>
            <person name="Papadelli M."/>
            <person name="Anastasiou R."/>
            <person name="Kalantzopoulos G."/>
            <person name="Tsakalidou E."/>
        </authorList>
    </citation>
    <scope>NUCLEOTIDE SEQUENCE [GENOMIC DNA]</scope>
    <source>
        <strain>ACA-DC 191</strain>
    </source>
</reference>